<sequence>MAHTNKHYLDLPGSYFFTEINQRVNTYKKTHPEKSIIRLSIGDVTRPLVPAVIKALHDATDEMGQPSSFHGYGPEHGYEFLIGEIIANDYTSRNVHIEADEIFVSDGTKCDIANIQELFDPSDTVAIIDPVYPVYIDSNVMSGRLGKLINGIWSKLIYLPCTIENNFIPELPTQHPDIIYLCYPNNPTGTVLSKDQLTIWVNYAKKEGAIILFDAAYEAYITDPTIPHSIYEIDGAKEVAIEFRSFSKTAGFTGLRCAYTVIPKELKANTREGNEQYLNMMWNRRQTTKYNGCSYIVQKAAAAIYTPEGQKQIQESIQYYMKNALIIQNAITQMGITAVGGINAPYVWIKTPDNLSSWDFFDLLLQNAGVVGTPGVGFGPHGEGYFRLTGFGSYEDTNKAIERIQKALLI</sequence>
<feature type="chain" id="PRO_0000342243" description="LL-diaminopimelate aminotransferase">
    <location>
        <begin position="1"/>
        <end position="410"/>
    </location>
</feature>
<feature type="binding site" evidence="1">
    <location>
        <position position="15"/>
    </location>
    <ligand>
        <name>substrate</name>
    </ligand>
</feature>
<feature type="binding site" evidence="1">
    <location>
        <position position="42"/>
    </location>
    <ligand>
        <name>substrate</name>
    </ligand>
</feature>
<feature type="binding site" evidence="1">
    <location>
        <position position="72"/>
    </location>
    <ligand>
        <name>pyridoxal 5'-phosphate</name>
        <dbReference type="ChEBI" id="CHEBI:597326"/>
    </ligand>
</feature>
<feature type="binding site" evidence="1">
    <location>
        <begin position="108"/>
        <end position="109"/>
    </location>
    <ligand>
        <name>pyridoxal 5'-phosphate</name>
        <dbReference type="ChEBI" id="CHEBI:597326"/>
    </ligand>
</feature>
<feature type="binding site" evidence="1">
    <location>
        <position position="109"/>
    </location>
    <ligand>
        <name>substrate</name>
    </ligand>
</feature>
<feature type="binding site" evidence="1">
    <location>
        <position position="132"/>
    </location>
    <ligand>
        <name>pyridoxal 5'-phosphate</name>
        <dbReference type="ChEBI" id="CHEBI:597326"/>
    </ligand>
</feature>
<feature type="binding site" evidence="1">
    <location>
        <position position="132"/>
    </location>
    <ligand>
        <name>substrate</name>
    </ligand>
</feature>
<feature type="binding site" evidence="1">
    <location>
        <position position="186"/>
    </location>
    <ligand>
        <name>pyridoxal 5'-phosphate</name>
        <dbReference type="ChEBI" id="CHEBI:597326"/>
    </ligand>
</feature>
<feature type="binding site" evidence="1">
    <location>
        <position position="186"/>
    </location>
    <ligand>
        <name>substrate</name>
    </ligand>
</feature>
<feature type="binding site" evidence="1">
    <location>
        <position position="217"/>
    </location>
    <ligand>
        <name>pyridoxal 5'-phosphate</name>
        <dbReference type="ChEBI" id="CHEBI:597326"/>
    </ligand>
</feature>
<feature type="binding site" evidence="1">
    <location>
        <begin position="245"/>
        <end position="247"/>
    </location>
    <ligand>
        <name>pyridoxal 5'-phosphate</name>
        <dbReference type="ChEBI" id="CHEBI:597326"/>
    </ligand>
</feature>
<feature type="binding site" evidence="1">
    <location>
        <position position="256"/>
    </location>
    <ligand>
        <name>pyridoxal 5'-phosphate</name>
        <dbReference type="ChEBI" id="CHEBI:597326"/>
    </ligand>
</feature>
<feature type="binding site" evidence="1">
    <location>
        <position position="291"/>
    </location>
    <ligand>
        <name>pyridoxal 5'-phosphate</name>
        <dbReference type="ChEBI" id="CHEBI:597326"/>
    </ligand>
</feature>
<feature type="binding site" evidence="1">
    <location>
        <position position="291"/>
    </location>
    <ligand>
        <name>substrate</name>
    </ligand>
</feature>
<feature type="binding site" evidence="1">
    <location>
        <position position="387"/>
    </location>
    <ligand>
        <name>substrate</name>
    </ligand>
</feature>
<feature type="modified residue" description="N6-(pyridoxal phosphate)lysine" evidence="1">
    <location>
        <position position="248"/>
    </location>
</feature>
<evidence type="ECO:0000255" key="1">
    <source>
        <dbReference type="HAMAP-Rule" id="MF_01642"/>
    </source>
</evidence>
<reference key="1">
    <citation type="submission" date="2005-11" db="EMBL/GenBank/DDBJ databases">
        <title>The complete genome sequence of Lawsonia intracellularis: the causative agent of proliferative enteropathy.</title>
        <authorList>
            <person name="Kaur K."/>
            <person name="Zhang Q."/>
            <person name="Beckler D."/>
            <person name="Munir S."/>
            <person name="Li L."/>
            <person name="Kinsley K."/>
            <person name="Herron L."/>
            <person name="Peterson A."/>
            <person name="May B."/>
            <person name="Singh S."/>
            <person name="Gebhart C."/>
            <person name="Kapur V."/>
        </authorList>
    </citation>
    <scope>NUCLEOTIDE SEQUENCE [LARGE SCALE GENOMIC DNA]</scope>
    <source>
        <strain>PHE/MN1-00</strain>
    </source>
</reference>
<accession>Q1MR87</accession>
<organism>
    <name type="scientific">Lawsonia intracellularis (strain PHE/MN1-00)</name>
    <dbReference type="NCBI Taxonomy" id="363253"/>
    <lineage>
        <taxon>Bacteria</taxon>
        <taxon>Pseudomonadati</taxon>
        <taxon>Thermodesulfobacteriota</taxon>
        <taxon>Desulfovibrionia</taxon>
        <taxon>Desulfovibrionales</taxon>
        <taxon>Desulfovibrionaceae</taxon>
        <taxon>Lawsonia</taxon>
    </lineage>
</organism>
<protein>
    <recommendedName>
        <fullName evidence="1">LL-diaminopimelate aminotransferase</fullName>
        <shortName evidence="1">DAP-AT</shortName>
        <shortName evidence="1">DAP-aminotransferase</shortName>
        <shortName evidence="1">LL-DAP-aminotransferase</shortName>
        <ecNumber evidence="1">2.6.1.83</ecNumber>
    </recommendedName>
</protein>
<keyword id="KW-0032">Aminotransferase</keyword>
<keyword id="KW-0663">Pyridoxal phosphate</keyword>
<keyword id="KW-1185">Reference proteome</keyword>
<keyword id="KW-0808">Transferase</keyword>
<gene>
    <name evidence="1" type="primary">dapL</name>
    <name type="ordered locus">LI0435</name>
</gene>
<dbReference type="EC" id="2.6.1.83" evidence="1"/>
<dbReference type="EMBL" id="AM180252">
    <property type="protein sequence ID" value="CAJ54489.1"/>
    <property type="molecule type" value="Genomic_DNA"/>
</dbReference>
<dbReference type="RefSeq" id="WP_011526519.1">
    <property type="nucleotide sequence ID" value="NC_008011.1"/>
</dbReference>
<dbReference type="SMR" id="Q1MR87"/>
<dbReference type="STRING" id="363253.LI0435"/>
<dbReference type="KEGG" id="lip:LI0435"/>
<dbReference type="eggNOG" id="COG0436">
    <property type="taxonomic scope" value="Bacteria"/>
</dbReference>
<dbReference type="HOGENOM" id="CLU_051433_0_0_7"/>
<dbReference type="OrthoDB" id="9804474at2"/>
<dbReference type="UniPathway" id="UPA00034">
    <property type="reaction ID" value="UER00466"/>
</dbReference>
<dbReference type="Proteomes" id="UP000002430">
    <property type="component" value="Chromosome"/>
</dbReference>
<dbReference type="GO" id="GO:0010285">
    <property type="term" value="F:L,L-diaminopimelate aminotransferase activity"/>
    <property type="evidence" value="ECO:0007669"/>
    <property type="project" value="UniProtKB-EC"/>
</dbReference>
<dbReference type="GO" id="GO:0030170">
    <property type="term" value="F:pyridoxal phosphate binding"/>
    <property type="evidence" value="ECO:0007669"/>
    <property type="project" value="InterPro"/>
</dbReference>
<dbReference type="GO" id="GO:0009089">
    <property type="term" value="P:lysine biosynthetic process via diaminopimelate"/>
    <property type="evidence" value="ECO:0007669"/>
    <property type="project" value="UniProtKB-UniPathway"/>
</dbReference>
<dbReference type="CDD" id="cd00609">
    <property type="entry name" value="AAT_like"/>
    <property type="match status" value="1"/>
</dbReference>
<dbReference type="FunFam" id="3.40.640.10:FF:000099">
    <property type="entry name" value="LL-diaminopimelate aminotransferase, chloroplastic"/>
    <property type="match status" value="1"/>
</dbReference>
<dbReference type="Gene3D" id="3.90.1150.10">
    <property type="entry name" value="Aspartate Aminotransferase, domain 1"/>
    <property type="match status" value="1"/>
</dbReference>
<dbReference type="Gene3D" id="3.40.640.10">
    <property type="entry name" value="Type I PLP-dependent aspartate aminotransferase-like (Major domain)"/>
    <property type="match status" value="1"/>
</dbReference>
<dbReference type="HAMAP" id="MF_01642">
    <property type="entry name" value="DapL_aminotrans_1"/>
    <property type="match status" value="1"/>
</dbReference>
<dbReference type="InterPro" id="IPR004839">
    <property type="entry name" value="Aminotransferase_I/II_large"/>
</dbReference>
<dbReference type="InterPro" id="IPR019942">
    <property type="entry name" value="DapL/ALD1"/>
</dbReference>
<dbReference type="InterPro" id="IPR015424">
    <property type="entry name" value="PyrdxlP-dep_Trfase"/>
</dbReference>
<dbReference type="InterPro" id="IPR015421">
    <property type="entry name" value="PyrdxlP-dep_Trfase_major"/>
</dbReference>
<dbReference type="InterPro" id="IPR015422">
    <property type="entry name" value="PyrdxlP-dep_Trfase_small"/>
</dbReference>
<dbReference type="NCBIfam" id="TIGR03542">
    <property type="entry name" value="DAPAT_plant"/>
    <property type="match status" value="1"/>
</dbReference>
<dbReference type="PANTHER" id="PTHR43144">
    <property type="entry name" value="AMINOTRANSFERASE"/>
    <property type="match status" value="1"/>
</dbReference>
<dbReference type="Pfam" id="PF00155">
    <property type="entry name" value="Aminotran_1_2"/>
    <property type="match status" value="1"/>
</dbReference>
<dbReference type="SUPFAM" id="SSF53383">
    <property type="entry name" value="PLP-dependent transferases"/>
    <property type="match status" value="1"/>
</dbReference>
<comment type="function">
    <text evidence="1">Involved in the synthesis of meso-diaminopimelate (m-DAP or DL-DAP), required for both lysine and peptidoglycan biosynthesis. Catalyzes the direct conversion of tetrahydrodipicolinate to LL-diaminopimelate.</text>
</comment>
<comment type="catalytic activity">
    <reaction evidence="1">
        <text>(2S,6S)-2,6-diaminopimelate + 2-oxoglutarate = (S)-2,3,4,5-tetrahydrodipicolinate + L-glutamate + H2O + H(+)</text>
        <dbReference type="Rhea" id="RHEA:23988"/>
        <dbReference type="ChEBI" id="CHEBI:15377"/>
        <dbReference type="ChEBI" id="CHEBI:15378"/>
        <dbReference type="ChEBI" id="CHEBI:16810"/>
        <dbReference type="ChEBI" id="CHEBI:16845"/>
        <dbReference type="ChEBI" id="CHEBI:29985"/>
        <dbReference type="ChEBI" id="CHEBI:57609"/>
        <dbReference type="EC" id="2.6.1.83"/>
    </reaction>
</comment>
<comment type="cofactor">
    <cofactor evidence="1">
        <name>pyridoxal 5'-phosphate</name>
        <dbReference type="ChEBI" id="CHEBI:597326"/>
    </cofactor>
</comment>
<comment type="pathway">
    <text evidence="1">Amino-acid biosynthesis; L-lysine biosynthesis via DAP pathway; LL-2,6-diaminopimelate from (S)-tetrahydrodipicolinate (aminotransferase route): step 1/1.</text>
</comment>
<comment type="subunit">
    <text evidence="1">Homodimer.</text>
</comment>
<comment type="similarity">
    <text evidence="1">Belongs to the class-I pyridoxal-phosphate-dependent aminotransferase family. LL-diaminopimelate aminotransferase subfamily.</text>
</comment>
<name>DAPAT_LAWIP</name>
<proteinExistence type="inferred from homology"/>